<reference key="1">
    <citation type="journal article" date="2008" name="Genome Res.">
        <title>The genome of Pelotomaculum thermopropionicum reveals niche-associated evolution in anaerobic microbiota.</title>
        <authorList>
            <person name="Kosaka T."/>
            <person name="Kato S."/>
            <person name="Shimoyama T."/>
            <person name="Ishii S."/>
            <person name="Abe T."/>
            <person name="Watanabe K."/>
        </authorList>
    </citation>
    <scope>NUCLEOTIDE SEQUENCE [LARGE SCALE GENOMIC DNA]</scope>
    <source>
        <strain>DSM 13744 / JCM 10971 / SI</strain>
    </source>
</reference>
<comment type="function">
    <text evidence="1">Catalyzes the base-exchange of a guanine (G) residue with the queuine precursor 7-aminomethyl-7-deazaguanine (PreQ1) at position 34 (anticodon wobble position) in tRNAs with GU(N) anticodons (tRNA-Asp, -Asn, -His and -Tyr). Catalysis occurs through a double-displacement mechanism. The nucleophile active site attacks the C1' of nucleotide 34 to detach the guanine base from the RNA, forming a covalent enzyme-RNA intermediate. The proton acceptor active site deprotonates the incoming PreQ1, allowing a nucleophilic attack on the C1' of the ribose to form the product. After dissociation, two additional enzymatic reactions on the tRNA convert PreQ1 to queuine (Q), resulting in the hypermodified nucleoside queuosine (7-(((4,5-cis-dihydroxy-2-cyclopenten-1-yl)amino)methyl)-7-deazaguanosine).</text>
</comment>
<comment type="catalytic activity">
    <reaction evidence="1">
        <text>7-aminomethyl-7-carbaguanine + guanosine(34) in tRNA = 7-aminomethyl-7-carbaguanosine(34) in tRNA + guanine</text>
        <dbReference type="Rhea" id="RHEA:24104"/>
        <dbReference type="Rhea" id="RHEA-COMP:10341"/>
        <dbReference type="Rhea" id="RHEA-COMP:10342"/>
        <dbReference type="ChEBI" id="CHEBI:16235"/>
        <dbReference type="ChEBI" id="CHEBI:58703"/>
        <dbReference type="ChEBI" id="CHEBI:74269"/>
        <dbReference type="ChEBI" id="CHEBI:82833"/>
        <dbReference type="EC" id="2.4.2.29"/>
    </reaction>
</comment>
<comment type="cofactor">
    <cofactor evidence="1">
        <name>Zn(2+)</name>
        <dbReference type="ChEBI" id="CHEBI:29105"/>
    </cofactor>
    <text evidence="1">Binds 1 zinc ion per subunit.</text>
</comment>
<comment type="pathway">
    <text evidence="1">tRNA modification; tRNA-queuosine biosynthesis.</text>
</comment>
<comment type="subunit">
    <text evidence="1">Homodimer. Within each dimer, one monomer is responsible for RNA recognition and catalysis, while the other monomer binds to the replacement base PreQ1.</text>
</comment>
<comment type="similarity">
    <text evidence="1">Belongs to the queuine tRNA-ribosyltransferase family.</text>
</comment>
<dbReference type="EC" id="2.4.2.29" evidence="1"/>
<dbReference type="EMBL" id="AP009389">
    <property type="protein sequence ID" value="BAF59213.1"/>
    <property type="molecule type" value="Genomic_DNA"/>
</dbReference>
<dbReference type="SMR" id="A5D3G6"/>
<dbReference type="STRING" id="370438.PTH_1032"/>
<dbReference type="KEGG" id="pth:PTH_1032"/>
<dbReference type="eggNOG" id="COG0343">
    <property type="taxonomic scope" value="Bacteria"/>
</dbReference>
<dbReference type="HOGENOM" id="CLU_022060_0_1_9"/>
<dbReference type="UniPathway" id="UPA00392"/>
<dbReference type="Proteomes" id="UP000006556">
    <property type="component" value="Chromosome"/>
</dbReference>
<dbReference type="GO" id="GO:0005829">
    <property type="term" value="C:cytosol"/>
    <property type="evidence" value="ECO:0007669"/>
    <property type="project" value="TreeGrafter"/>
</dbReference>
<dbReference type="GO" id="GO:0046872">
    <property type="term" value="F:metal ion binding"/>
    <property type="evidence" value="ECO:0007669"/>
    <property type="project" value="UniProtKB-KW"/>
</dbReference>
<dbReference type="GO" id="GO:0008479">
    <property type="term" value="F:tRNA-guanosine(34) queuine transglycosylase activity"/>
    <property type="evidence" value="ECO:0007669"/>
    <property type="project" value="UniProtKB-UniRule"/>
</dbReference>
<dbReference type="GO" id="GO:0008616">
    <property type="term" value="P:queuosine biosynthetic process"/>
    <property type="evidence" value="ECO:0007669"/>
    <property type="project" value="UniProtKB-UniRule"/>
</dbReference>
<dbReference type="GO" id="GO:0002099">
    <property type="term" value="P:tRNA wobble guanine modification"/>
    <property type="evidence" value="ECO:0007669"/>
    <property type="project" value="TreeGrafter"/>
</dbReference>
<dbReference type="GO" id="GO:0101030">
    <property type="term" value="P:tRNA-guanine transglycosylation"/>
    <property type="evidence" value="ECO:0007669"/>
    <property type="project" value="InterPro"/>
</dbReference>
<dbReference type="FunFam" id="3.20.20.105:FF:000001">
    <property type="entry name" value="Queuine tRNA-ribosyltransferase"/>
    <property type="match status" value="1"/>
</dbReference>
<dbReference type="Gene3D" id="3.20.20.105">
    <property type="entry name" value="Queuine tRNA-ribosyltransferase-like"/>
    <property type="match status" value="1"/>
</dbReference>
<dbReference type="HAMAP" id="MF_00168">
    <property type="entry name" value="Q_tRNA_Tgt"/>
    <property type="match status" value="1"/>
</dbReference>
<dbReference type="InterPro" id="IPR050076">
    <property type="entry name" value="ArchSynthase1/Queuine_TRR"/>
</dbReference>
<dbReference type="InterPro" id="IPR004803">
    <property type="entry name" value="TGT"/>
</dbReference>
<dbReference type="InterPro" id="IPR036511">
    <property type="entry name" value="TGT-like_sf"/>
</dbReference>
<dbReference type="InterPro" id="IPR002616">
    <property type="entry name" value="tRNA_ribo_trans-like"/>
</dbReference>
<dbReference type="NCBIfam" id="TIGR00430">
    <property type="entry name" value="Q_tRNA_tgt"/>
    <property type="match status" value="1"/>
</dbReference>
<dbReference type="NCBIfam" id="TIGR00449">
    <property type="entry name" value="tgt_general"/>
    <property type="match status" value="1"/>
</dbReference>
<dbReference type="PANTHER" id="PTHR46499">
    <property type="entry name" value="QUEUINE TRNA-RIBOSYLTRANSFERASE"/>
    <property type="match status" value="1"/>
</dbReference>
<dbReference type="PANTHER" id="PTHR46499:SF1">
    <property type="entry name" value="QUEUINE TRNA-RIBOSYLTRANSFERASE"/>
    <property type="match status" value="1"/>
</dbReference>
<dbReference type="Pfam" id="PF01702">
    <property type="entry name" value="TGT"/>
    <property type="match status" value="1"/>
</dbReference>
<dbReference type="SUPFAM" id="SSF51713">
    <property type="entry name" value="tRNA-guanine transglycosylase"/>
    <property type="match status" value="1"/>
</dbReference>
<organism>
    <name type="scientific">Pelotomaculum thermopropionicum (strain DSM 13744 / JCM 10971 / SI)</name>
    <dbReference type="NCBI Taxonomy" id="370438"/>
    <lineage>
        <taxon>Bacteria</taxon>
        <taxon>Bacillati</taxon>
        <taxon>Bacillota</taxon>
        <taxon>Clostridia</taxon>
        <taxon>Eubacteriales</taxon>
        <taxon>Desulfotomaculaceae</taxon>
        <taxon>Pelotomaculum</taxon>
    </lineage>
</organism>
<name>TGT_PELTS</name>
<gene>
    <name evidence="1" type="primary">tgt</name>
    <name type="ordered locus">PTH_1032</name>
</gene>
<protein>
    <recommendedName>
        <fullName evidence="1">Queuine tRNA-ribosyltransferase</fullName>
        <ecNumber evidence="1">2.4.2.29</ecNumber>
    </recommendedName>
    <alternativeName>
        <fullName evidence="1">Guanine insertion enzyme</fullName>
    </alternativeName>
    <alternativeName>
        <fullName evidence="1">tRNA-guanine transglycosylase</fullName>
    </alternativeName>
</protein>
<proteinExistence type="inferred from homology"/>
<keyword id="KW-0328">Glycosyltransferase</keyword>
<keyword id="KW-0479">Metal-binding</keyword>
<keyword id="KW-0671">Queuosine biosynthesis</keyword>
<keyword id="KW-1185">Reference proteome</keyword>
<keyword id="KW-0808">Transferase</keyword>
<keyword id="KW-0819">tRNA processing</keyword>
<keyword id="KW-0862">Zinc</keyword>
<feature type="chain" id="PRO_1000077013" description="Queuine tRNA-ribosyltransferase">
    <location>
        <begin position="1"/>
        <end position="370"/>
    </location>
</feature>
<feature type="region of interest" description="RNA binding" evidence="1">
    <location>
        <begin position="247"/>
        <end position="253"/>
    </location>
</feature>
<feature type="region of interest" description="RNA binding; important for wobble base 34 recognition" evidence="1">
    <location>
        <begin position="271"/>
        <end position="275"/>
    </location>
</feature>
<feature type="active site" description="Proton acceptor" evidence="1">
    <location>
        <position position="93"/>
    </location>
</feature>
<feature type="active site" description="Nucleophile" evidence="1">
    <location>
        <position position="266"/>
    </location>
</feature>
<feature type="binding site" evidence="1">
    <location>
        <begin position="93"/>
        <end position="97"/>
    </location>
    <ligand>
        <name>substrate</name>
    </ligand>
</feature>
<feature type="binding site" evidence="1">
    <location>
        <position position="147"/>
    </location>
    <ligand>
        <name>substrate</name>
    </ligand>
</feature>
<feature type="binding site" evidence="1">
    <location>
        <position position="189"/>
    </location>
    <ligand>
        <name>substrate</name>
    </ligand>
</feature>
<feature type="binding site" evidence="1">
    <location>
        <position position="216"/>
    </location>
    <ligand>
        <name>substrate</name>
    </ligand>
</feature>
<feature type="binding site" evidence="1">
    <location>
        <position position="304"/>
    </location>
    <ligand>
        <name>Zn(2+)</name>
        <dbReference type="ChEBI" id="CHEBI:29105"/>
    </ligand>
</feature>
<feature type="binding site" evidence="1">
    <location>
        <position position="306"/>
    </location>
    <ligand>
        <name>Zn(2+)</name>
        <dbReference type="ChEBI" id="CHEBI:29105"/>
    </ligand>
</feature>
<feature type="binding site" evidence="1">
    <location>
        <position position="309"/>
    </location>
    <ligand>
        <name>Zn(2+)</name>
        <dbReference type="ChEBI" id="CHEBI:29105"/>
    </ligand>
</feature>
<feature type="binding site" evidence="1">
    <location>
        <position position="335"/>
    </location>
    <ligand>
        <name>Zn(2+)</name>
        <dbReference type="ChEBI" id="CHEBI:29105"/>
    </ligand>
</feature>
<evidence type="ECO:0000255" key="1">
    <source>
        <dbReference type="HAMAP-Rule" id="MF_00168"/>
    </source>
</evidence>
<accession>A5D3G6</accession>
<sequence>MAVSFTITYKDESTGARLGLLYTPHGTVETPVFMPVGTQATVKTMTPEEVRDIGGRMILSNTYHLYLRPGHELIREAGGLHRFMHWDGPILTDSGGFQVFSLGPLRKVSEEGVAFRSHIDGSEHFFSPEKAMEVQMALGSDIAMAFDECAPYPCSREYALAATERTTRWARRCRTAHDREDQGLFGIVQGGTFKDLRERSARELVELDFPGYAIGGLSVGEPKQLMYEVLDYTVPLLPEEKPRYLMGVGSPDCLVEGVLRGIDMFDCVLPTRIARNGTALTRQGRLVVRNAEYARDFSPLEPDCDCYACRNYTRAYIRHLIKANEILGIRLTTIHNLYFIMKLMEEIRAAVRQGRMLQFRDDFLRKYQGD</sequence>